<feature type="chain" id="PRO_0000338963" description="Translation initiation factor IF-1, chloroplastic">
    <location>
        <begin position="1"/>
        <end position="113"/>
    </location>
</feature>
<feature type="domain" description="S1-like" evidence="1">
    <location>
        <begin position="8"/>
        <end position="83"/>
    </location>
</feature>
<feature type="region of interest" description="Disordered" evidence="2">
    <location>
        <begin position="86"/>
        <end position="113"/>
    </location>
</feature>
<feature type="sequence variant" description="In strain: cv. CL2l.">
    <original>F</original>
    <variation>L</variation>
    <location>
        <position position="33"/>
    </location>
</feature>
<feature type="sequence variant" description="In strain: cv. CL2.">
    <original>S</original>
    <variation>P</variation>
    <location>
        <position position="53"/>
    </location>
</feature>
<feature type="sequence conflict" description="In Ref. 2; ABK79446." evidence="3" ref="2">
    <original>D</original>
    <variation>N</variation>
    <location>
        <position position="107"/>
    </location>
</feature>
<dbReference type="EMBL" id="AY488512">
    <property type="protein sequence ID" value="AAR85888.2"/>
    <property type="molecule type" value="Genomic_DNA"/>
</dbReference>
<dbReference type="EMBL" id="AY488513">
    <property type="protein sequence ID" value="AAR85889.2"/>
    <property type="molecule type" value="Genomic_DNA"/>
</dbReference>
<dbReference type="EMBL" id="AY743911">
    <property type="protein sequence ID" value="AAU93687.2"/>
    <property type="molecule type" value="Genomic_DNA"/>
</dbReference>
<dbReference type="EMBL" id="EF115541">
    <property type="protein sequence ID" value="ABK79446.1"/>
    <property type="molecule type" value="Genomic_DNA"/>
</dbReference>
<dbReference type="SMR" id="A1E9M5"/>
<dbReference type="GO" id="GO:0009507">
    <property type="term" value="C:chloroplast"/>
    <property type="evidence" value="ECO:0007669"/>
    <property type="project" value="UniProtKB-SubCell"/>
</dbReference>
<dbReference type="GO" id="GO:0005829">
    <property type="term" value="C:cytosol"/>
    <property type="evidence" value="ECO:0007669"/>
    <property type="project" value="TreeGrafter"/>
</dbReference>
<dbReference type="GO" id="GO:0043022">
    <property type="term" value="F:ribosome binding"/>
    <property type="evidence" value="ECO:0007669"/>
    <property type="project" value="UniProtKB-UniRule"/>
</dbReference>
<dbReference type="GO" id="GO:0019843">
    <property type="term" value="F:rRNA binding"/>
    <property type="evidence" value="ECO:0007669"/>
    <property type="project" value="UniProtKB-UniRule"/>
</dbReference>
<dbReference type="GO" id="GO:0003743">
    <property type="term" value="F:translation initiation factor activity"/>
    <property type="evidence" value="ECO:0007669"/>
    <property type="project" value="UniProtKB-UniRule"/>
</dbReference>
<dbReference type="CDD" id="cd04451">
    <property type="entry name" value="S1_IF1"/>
    <property type="match status" value="1"/>
</dbReference>
<dbReference type="FunFam" id="2.40.50.140:FF:000019">
    <property type="entry name" value="Translation initiation factor IF-1, chloroplastic"/>
    <property type="match status" value="1"/>
</dbReference>
<dbReference type="Gene3D" id="2.40.50.140">
    <property type="entry name" value="Nucleic acid-binding proteins"/>
    <property type="match status" value="1"/>
</dbReference>
<dbReference type="HAMAP" id="MF_00075">
    <property type="entry name" value="IF_1"/>
    <property type="match status" value="1"/>
</dbReference>
<dbReference type="InterPro" id="IPR012340">
    <property type="entry name" value="NA-bd_OB-fold"/>
</dbReference>
<dbReference type="InterPro" id="IPR006196">
    <property type="entry name" value="RNA-binding_domain_S1_IF1"/>
</dbReference>
<dbReference type="InterPro" id="IPR003029">
    <property type="entry name" value="S1_domain"/>
</dbReference>
<dbReference type="InterPro" id="IPR004368">
    <property type="entry name" value="TIF_IF1"/>
</dbReference>
<dbReference type="NCBIfam" id="TIGR00008">
    <property type="entry name" value="infA"/>
    <property type="match status" value="1"/>
</dbReference>
<dbReference type="PANTHER" id="PTHR33370">
    <property type="entry name" value="TRANSLATION INITIATION FACTOR IF-1, CHLOROPLASTIC"/>
    <property type="match status" value="1"/>
</dbReference>
<dbReference type="PANTHER" id="PTHR33370:SF1">
    <property type="entry name" value="TRANSLATION INITIATION FACTOR IF-1, CHLOROPLASTIC"/>
    <property type="match status" value="1"/>
</dbReference>
<dbReference type="Pfam" id="PF01176">
    <property type="entry name" value="eIF-1a"/>
    <property type="match status" value="1"/>
</dbReference>
<dbReference type="SMART" id="SM00316">
    <property type="entry name" value="S1"/>
    <property type="match status" value="1"/>
</dbReference>
<dbReference type="SUPFAM" id="SSF50249">
    <property type="entry name" value="Nucleic acid-binding proteins"/>
    <property type="match status" value="1"/>
</dbReference>
<dbReference type="PROSITE" id="PS50832">
    <property type="entry name" value="S1_IF1_TYPE"/>
    <property type="match status" value="1"/>
</dbReference>
<protein>
    <recommendedName>
        <fullName evidence="1">Translation initiation factor IF-1, chloroplastic</fullName>
    </recommendedName>
</protein>
<gene>
    <name evidence="1" type="primary">infA</name>
</gene>
<proteinExistence type="inferred from homology"/>
<comment type="function">
    <text evidence="1">One of the essential components for the initiation of protein synthesis. Stabilizes the binding of IF-2 and IF-3 on the 30S subunit to which N-formylmethionyl-tRNA(fMet) subsequently binds. Helps modulate mRNA selection, yielding the 30S pre-initiation complex (PIC). Upon addition of the 50S ribosomal subunit IF-1, IF-2 and IF-3 are released leaving the mature 70S translation initiation complex.</text>
</comment>
<comment type="subunit">
    <text evidence="1">Component of the 30S ribosomal translation pre-initiation complex which assembles on the 30S ribosome in the order IF-2 and IF-3, IF-1 and N-formylmethionyl-tRNA(fMet); mRNA recruitment can occur at any time during PIC assembly.</text>
</comment>
<comment type="subcellular location">
    <subcellularLocation>
        <location evidence="1">Plastid</location>
        <location evidence="1">Chloroplast</location>
    </subcellularLocation>
</comment>
<comment type="similarity">
    <text evidence="1">Belongs to the IF-1 family.</text>
</comment>
<name>IF1C_HORVU</name>
<keyword id="KW-0150">Chloroplast</keyword>
<keyword id="KW-0396">Initiation factor</keyword>
<keyword id="KW-0934">Plastid</keyword>
<keyword id="KW-0648">Protein biosynthesis</keyword>
<keyword id="KW-0694">RNA-binding</keyword>
<keyword id="KW-0699">rRNA-binding</keyword>
<accession>A1E9M5</accession>
<accession>Q5XPK2</accession>
<accession>Q6RVV5</accession>
<accession>Q6RVV6</accession>
<sequence length="113" mass="13117">MTEKKNRREKKNPREAKVTFEGLVTEALPNGMFRVRLENDTIILGYISGKIRSSSIRILMGDRVKIEVSRYDSSKGRIIYRLPHKDSKRIEDSKDSEDLKDSEDLKDTKDSKD</sequence>
<organism>
    <name type="scientific">Hordeum vulgare</name>
    <name type="common">Barley</name>
    <dbReference type="NCBI Taxonomy" id="4513"/>
    <lineage>
        <taxon>Eukaryota</taxon>
        <taxon>Viridiplantae</taxon>
        <taxon>Streptophyta</taxon>
        <taxon>Embryophyta</taxon>
        <taxon>Tracheophyta</taxon>
        <taxon>Spermatophyta</taxon>
        <taxon>Magnoliopsida</taxon>
        <taxon>Liliopsida</taxon>
        <taxon>Poales</taxon>
        <taxon>Poaceae</taxon>
        <taxon>BOP clade</taxon>
        <taxon>Pooideae</taxon>
        <taxon>Triticodae</taxon>
        <taxon>Triticeae</taxon>
        <taxon>Hordeinae</taxon>
        <taxon>Hordeum</taxon>
    </lineage>
</organism>
<geneLocation type="chloroplast"/>
<reference key="1">
    <citation type="journal article" date="2007" name="J. Hered.">
        <title>Two infA gene mutations independently originated from a mutator genotype in barley.</title>
        <authorList>
            <person name="Landau A."/>
            <person name="Diaz Paleo A."/>
            <person name="Civitillo R."/>
            <person name="Jaureguialzo M."/>
            <person name="Prina A.R."/>
        </authorList>
    </citation>
    <scope>NUCLEOTIDE SEQUENCE [GENOMIC DNA / MRNA]</scope>
    <source>
        <strain>cv. CL2</strain>
        <strain>cv. CL2l</strain>
        <strain>cv. MC182</strain>
    </source>
</reference>
<reference key="2">
    <citation type="journal article" date="2007" name="Theor. Appl. Genet.">
        <title>Complete chloroplast genome sequences of Hordeum vulgare, Sorghum bicolor and Agrostis stolonifera, and comparative analyses with other grass genomes.</title>
        <authorList>
            <person name="Saski C."/>
            <person name="Lee S.-B."/>
            <person name="Fjellheim S."/>
            <person name="Guda C."/>
            <person name="Jansen R.K."/>
            <person name="Luo H."/>
            <person name="Tomkins J."/>
            <person name="Rognli O.A."/>
            <person name="Daniell H."/>
            <person name="Clarke J.L."/>
        </authorList>
    </citation>
    <scope>NUCLEOTIDE SEQUENCE [LARGE SCALE GENOMIC DNA]</scope>
    <source>
        <strain>cv. Morex</strain>
    </source>
</reference>
<evidence type="ECO:0000255" key="1">
    <source>
        <dbReference type="HAMAP-Rule" id="MF_00075"/>
    </source>
</evidence>
<evidence type="ECO:0000256" key="2">
    <source>
        <dbReference type="SAM" id="MobiDB-lite"/>
    </source>
</evidence>
<evidence type="ECO:0000305" key="3"/>